<keyword id="KW-0002">3D-structure</keyword>
<keyword id="KW-0025">Alternative splicing</keyword>
<keyword id="KW-0488">Methylation</keyword>
<keyword id="KW-0597">Phosphoprotein</keyword>
<keyword id="KW-1185">Reference proteome</keyword>
<keyword id="KW-0728">SH3 domain</keyword>
<accession>D4A055</accession>
<proteinExistence type="evidence at protein level"/>
<dbReference type="EMBL" id="AABR07052125">
    <property type="status" value="NOT_ANNOTATED_CDS"/>
    <property type="molecule type" value="Genomic_DNA"/>
</dbReference>
<dbReference type="EMBL" id="AABR07052126">
    <property type="status" value="NOT_ANNOTATED_CDS"/>
    <property type="molecule type" value="Genomic_DNA"/>
</dbReference>
<dbReference type="EMBL" id="CH473983">
    <property type="protein sequence ID" value="EDM00433.1"/>
    <property type="molecule type" value="Genomic_DNA"/>
</dbReference>
<dbReference type="RefSeq" id="NP_001099203.1">
    <molecule id="D4A055-1"/>
    <property type="nucleotide sequence ID" value="NM_001105733.3"/>
</dbReference>
<dbReference type="RefSeq" id="NP_001386072.1">
    <molecule id="D4A055-2"/>
    <property type="nucleotide sequence ID" value="NM_001399143.2"/>
</dbReference>
<dbReference type="RefSeq" id="XP_017447488.1">
    <property type="nucleotide sequence ID" value="XM_017591999.1"/>
</dbReference>
<dbReference type="PDB" id="1VYV">
    <property type="method" value="X-ray"/>
    <property type="resolution" value="3.00 A"/>
    <property type="chains" value="A/B=49-407"/>
</dbReference>
<dbReference type="PDB" id="6HW2">
    <property type="method" value="X-ray"/>
    <property type="resolution" value="1.94 A"/>
    <property type="chains" value="A=56-232"/>
</dbReference>
<dbReference type="PDBsum" id="1VYV"/>
<dbReference type="PDBsum" id="6HW2"/>
<dbReference type="SMR" id="D4A055"/>
<dbReference type="FunCoup" id="D4A055">
    <property type="interactions" value="3319"/>
</dbReference>
<dbReference type="IntAct" id="D4A055">
    <property type="interactions" value="4"/>
</dbReference>
<dbReference type="MINT" id="D4A055"/>
<dbReference type="STRING" id="10116.ENSRNOP00000056186"/>
<dbReference type="iPTMnet" id="D4A055"/>
<dbReference type="PhosphoSitePlus" id="D4A055"/>
<dbReference type="PaxDb" id="10116-ENSRNOP00000056186"/>
<dbReference type="ABCD" id="D4A055">
    <property type="antibodies" value="1 sequenced antibody"/>
</dbReference>
<dbReference type="Ensembl" id="ENSRNOT00000107851.1">
    <molecule id="D4A055-2"/>
    <property type="protein sequence ID" value="ENSRNOP00000097125.1"/>
    <property type="gene ID" value="ENSRNOG00000007666.7"/>
</dbReference>
<dbReference type="GeneID" id="58942"/>
<dbReference type="KEGG" id="rno:58942"/>
<dbReference type="AGR" id="RGD:68385"/>
<dbReference type="CTD" id="785"/>
<dbReference type="RGD" id="68385">
    <property type="gene designation" value="Cacnb4"/>
</dbReference>
<dbReference type="eggNOG" id="KOG3812">
    <property type="taxonomic scope" value="Eukaryota"/>
</dbReference>
<dbReference type="GeneTree" id="ENSGT00950000182837"/>
<dbReference type="HOGENOM" id="CLU_021995_0_1_1"/>
<dbReference type="InParanoid" id="D4A055"/>
<dbReference type="OMA" id="WRSTHAS"/>
<dbReference type="OrthoDB" id="5962384at2759"/>
<dbReference type="PhylomeDB" id="D4A055"/>
<dbReference type="TreeFam" id="TF316195"/>
<dbReference type="Reactome" id="R-RNO-112308">
    <property type="pathway name" value="Presynaptic depolarization and calcium channel opening"/>
</dbReference>
<dbReference type="EvolutionaryTrace" id="D4A055"/>
<dbReference type="PRO" id="PR:D4A055"/>
<dbReference type="Proteomes" id="UP000002494">
    <property type="component" value="Chromosome 3"/>
</dbReference>
<dbReference type="Proteomes" id="UP000234681">
    <property type="component" value="Chromosome 3"/>
</dbReference>
<dbReference type="Bgee" id="ENSRNOG00000007666">
    <property type="expression patterns" value="Expressed in frontal cortex and 9 other cell types or tissues"/>
</dbReference>
<dbReference type="GO" id="GO:0098978">
    <property type="term" value="C:glutamatergic synapse"/>
    <property type="evidence" value="ECO:0000266"/>
    <property type="project" value="RGD"/>
</dbReference>
<dbReference type="GO" id="GO:0016607">
    <property type="term" value="C:nuclear speck"/>
    <property type="evidence" value="ECO:0000314"/>
    <property type="project" value="RGD"/>
</dbReference>
<dbReference type="GO" id="GO:0005886">
    <property type="term" value="C:plasma membrane"/>
    <property type="evidence" value="ECO:0000266"/>
    <property type="project" value="RGD"/>
</dbReference>
<dbReference type="GO" id="GO:0098793">
    <property type="term" value="C:presynapse"/>
    <property type="evidence" value="ECO:0000314"/>
    <property type="project" value="SynGO"/>
</dbReference>
<dbReference type="GO" id="GO:0005891">
    <property type="term" value="C:voltage-gated calcium channel complex"/>
    <property type="evidence" value="ECO:0000266"/>
    <property type="project" value="RGD"/>
</dbReference>
<dbReference type="GO" id="GO:0008331">
    <property type="term" value="F:high voltage-gated calcium channel activity"/>
    <property type="evidence" value="ECO:0000318"/>
    <property type="project" value="GO_Central"/>
</dbReference>
<dbReference type="GO" id="GO:0019901">
    <property type="term" value="F:protein kinase binding"/>
    <property type="evidence" value="ECO:0000314"/>
    <property type="project" value="RGD"/>
</dbReference>
<dbReference type="GO" id="GO:0005245">
    <property type="term" value="F:voltage-gated calcium channel activity"/>
    <property type="evidence" value="ECO:0000315"/>
    <property type="project" value="RGD"/>
</dbReference>
<dbReference type="GO" id="GO:0099626">
    <property type="term" value="F:voltage-gated calcium channel activity involved in regulation of presynaptic cytosolic calcium levels"/>
    <property type="evidence" value="ECO:0000266"/>
    <property type="project" value="RGD"/>
</dbReference>
<dbReference type="GO" id="GO:0007628">
    <property type="term" value="P:adult walking behavior"/>
    <property type="evidence" value="ECO:0000266"/>
    <property type="project" value="RGD"/>
</dbReference>
<dbReference type="GO" id="GO:0006816">
    <property type="term" value="P:calcium ion transport"/>
    <property type="evidence" value="ECO:0000315"/>
    <property type="project" value="RGD"/>
</dbReference>
<dbReference type="GO" id="GO:0046058">
    <property type="term" value="P:cAMP metabolic process"/>
    <property type="evidence" value="ECO:0000266"/>
    <property type="project" value="RGD"/>
</dbReference>
<dbReference type="GO" id="GO:1990830">
    <property type="term" value="P:cellular response to leukemia inhibitory factor"/>
    <property type="evidence" value="ECO:0000266"/>
    <property type="project" value="RGD"/>
</dbReference>
<dbReference type="GO" id="GO:0007268">
    <property type="term" value="P:chemical synaptic transmission"/>
    <property type="evidence" value="ECO:0000318"/>
    <property type="project" value="GO_Central"/>
</dbReference>
<dbReference type="GO" id="GO:0050908">
    <property type="term" value="P:detection of light stimulus involved in visual perception"/>
    <property type="evidence" value="ECO:0000266"/>
    <property type="project" value="RGD"/>
</dbReference>
<dbReference type="GO" id="GO:0014051">
    <property type="term" value="P:gamma-aminobutyric acid secretion"/>
    <property type="evidence" value="ECO:0000266"/>
    <property type="project" value="RGD"/>
</dbReference>
<dbReference type="GO" id="GO:0007214">
    <property type="term" value="P:gamma-aminobutyric acid signaling pathway"/>
    <property type="evidence" value="ECO:0000266"/>
    <property type="project" value="RGD"/>
</dbReference>
<dbReference type="GO" id="GO:0055001">
    <property type="term" value="P:muscle cell development"/>
    <property type="evidence" value="ECO:0000266"/>
    <property type="project" value="RGD"/>
</dbReference>
<dbReference type="GO" id="GO:0008285">
    <property type="term" value="P:negative regulation of cell population proliferation"/>
    <property type="evidence" value="ECO:0000314"/>
    <property type="project" value="RGD"/>
</dbReference>
<dbReference type="GO" id="GO:2000134">
    <property type="term" value="P:negative regulation of G1/S transition of mitotic cell cycle"/>
    <property type="evidence" value="ECO:0000314"/>
    <property type="project" value="RGD"/>
</dbReference>
<dbReference type="GO" id="GO:0050877">
    <property type="term" value="P:nervous system process"/>
    <property type="evidence" value="ECO:0000266"/>
    <property type="project" value="RGD"/>
</dbReference>
<dbReference type="GO" id="GO:0007528">
    <property type="term" value="P:neuromuscular junction development"/>
    <property type="evidence" value="ECO:0000266"/>
    <property type="project" value="RGD"/>
</dbReference>
<dbReference type="GO" id="GO:0019227">
    <property type="term" value="P:neuronal action potential propagation"/>
    <property type="evidence" value="ECO:0000266"/>
    <property type="project" value="RGD"/>
</dbReference>
<dbReference type="GO" id="GO:0048541">
    <property type="term" value="P:Peyer's patch development"/>
    <property type="evidence" value="ECO:0000266"/>
    <property type="project" value="RGD"/>
</dbReference>
<dbReference type="GO" id="GO:1904751">
    <property type="term" value="P:positive regulation of protein localization to nucleolus"/>
    <property type="evidence" value="ECO:0000314"/>
    <property type="project" value="RGD"/>
</dbReference>
<dbReference type="GO" id="GO:0042391">
    <property type="term" value="P:regulation of membrane potential"/>
    <property type="evidence" value="ECO:0000266"/>
    <property type="project" value="RGD"/>
</dbReference>
<dbReference type="GO" id="GO:2000300">
    <property type="term" value="P:regulation of synaptic vesicle exocytosis"/>
    <property type="evidence" value="ECO:0000266"/>
    <property type="project" value="RGD"/>
</dbReference>
<dbReference type="GO" id="GO:0048536">
    <property type="term" value="P:spleen development"/>
    <property type="evidence" value="ECO:0000266"/>
    <property type="project" value="RGD"/>
</dbReference>
<dbReference type="GO" id="GO:0035249">
    <property type="term" value="P:synaptic transmission, glutamatergic"/>
    <property type="evidence" value="ECO:0000266"/>
    <property type="project" value="RGD"/>
</dbReference>
<dbReference type="GO" id="GO:0050852">
    <property type="term" value="P:T cell receptor signaling pathway"/>
    <property type="evidence" value="ECO:0000266"/>
    <property type="project" value="RGD"/>
</dbReference>
<dbReference type="GO" id="GO:0048538">
    <property type="term" value="P:thymus development"/>
    <property type="evidence" value="ECO:0000266"/>
    <property type="project" value="RGD"/>
</dbReference>
<dbReference type="CDD" id="cd12043">
    <property type="entry name" value="SH3_CACNB4"/>
    <property type="match status" value="1"/>
</dbReference>
<dbReference type="FunFam" id="3.40.50.300:FF:000432">
    <property type="entry name" value="Voltage-dependent L-type calcium channel subunit beta-1 isoform 1"/>
    <property type="match status" value="1"/>
</dbReference>
<dbReference type="FunFam" id="2.30.30.40:FF:000015">
    <property type="entry name" value="Voltage-dependent L-type calcium channel subunit beta-2"/>
    <property type="match status" value="1"/>
</dbReference>
<dbReference type="Gene3D" id="3.40.50.300">
    <property type="entry name" value="P-loop containing nucleotide triphosphate hydrolases"/>
    <property type="match status" value="1"/>
</dbReference>
<dbReference type="Gene3D" id="2.30.30.40">
    <property type="entry name" value="SH3 Domains"/>
    <property type="match status" value="1"/>
</dbReference>
<dbReference type="InterPro" id="IPR046937">
    <property type="entry name" value="CAB1-4_N_A-dom"/>
</dbReference>
<dbReference type="InterPro" id="IPR008145">
    <property type="entry name" value="GK/Ca_channel_bsu"/>
</dbReference>
<dbReference type="InterPro" id="IPR027417">
    <property type="entry name" value="P-loop_NTPase"/>
</dbReference>
<dbReference type="InterPro" id="IPR036028">
    <property type="entry name" value="SH3-like_dom_sf"/>
</dbReference>
<dbReference type="InterPro" id="IPR001452">
    <property type="entry name" value="SH3_domain"/>
</dbReference>
<dbReference type="InterPro" id="IPR000584">
    <property type="entry name" value="VDCC_L_bsu"/>
</dbReference>
<dbReference type="PANTHER" id="PTHR11824">
    <property type="entry name" value="VOLTAGE-DEPENDENT CALCIUM CHANNEL BETA SUBUNIT"/>
    <property type="match status" value="1"/>
</dbReference>
<dbReference type="Pfam" id="PF00625">
    <property type="entry name" value="Guanylate_kin"/>
    <property type="match status" value="1"/>
</dbReference>
<dbReference type="Pfam" id="PF12052">
    <property type="entry name" value="VGCC_beta4Aa_N"/>
    <property type="match status" value="1"/>
</dbReference>
<dbReference type="PRINTS" id="PR01626">
    <property type="entry name" value="LCACHANNELB"/>
</dbReference>
<dbReference type="SMART" id="SM00072">
    <property type="entry name" value="GuKc"/>
    <property type="match status" value="1"/>
</dbReference>
<dbReference type="SUPFAM" id="SSF52540">
    <property type="entry name" value="P-loop containing nucleoside triphosphate hydrolases"/>
    <property type="match status" value="1"/>
</dbReference>
<dbReference type="SUPFAM" id="SSF50044">
    <property type="entry name" value="SH3-domain"/>
    <property type="match status" value="1"/>
</dbReference>
<dbReference type="PROSITE" id="PS50002">
    <property type="entry name" value="SH3"/>
    <property type="match status" value="1"/>
</dbReference>
<reference key="1">
    <citation type="journal article" date="2004" name="Nature">
        <title>Genome sequence of the Brown Norway rat yields insights into mammalian evolution.</title>
        <authorList>
            <person name="Gibbs R.A."/>
            <person name="Weinstock G.M."/>
            <person name="Metzker M.L."/>
            <person name="Muzny D.M."/>
            <person name="Sodergren E.J."/>
            <person name="Scherer S."/>
            <person name="Scott G."/>
            <person name="Steffen D."/>
            <person name="Worley K.C."/>
            <person name="Burch P.E."/>
            <person name="Okwuonu G."/>
            <person name="Hines S."/>
            <person name="Lewis L."/>
            <person name="Deramo C."/>
            <person name="Delgado O."/>
            <person name="Dugan-Rocha S."/>
            <person name="Miner G."/>
            <person name="Morgan M."/>
            <person name="Hawes A."/>
            <person name="Gill R."/>
            <person name="Holt R.A."/>
            <person name="Adams M.D."/>
            <person name="Amanatides P.G."/>
            <person name="Baden-Tillson H."/>
            <person name="Barnstead M."/>
            <person name="Chin S."/>
            <person name="Evans C.A."/>
            <person name="Ferriera S."/>
            <person name="Fosler C."/>
            <person name="Glodek A."/>
            <person name="Gu Z."/>
            <person name="Jennings D."/>
            <person name="Kraft C.L."/>
            <person name="Nguyen T."/>
            <person name="Pfannkoch C.M."/>
            <person name="Sitter C."/>
            <person name="Sutton G.G."/>
            <person name="Venter J.C."/>
            <person name="Woodage T."/>
            <person name="Smith D."/>
            <person name="Lee H.-M."/>
            <person name="Gustafson E."/>
            <person name="Cahill P."/>
            <person name="Kana A."/>
            <person name="Doucette-Stamm L."/>
            <person name="Weinstock K."/>
            <person name="Fechtel K."/>
            <person name="Weiss R.B."/>
            <person name="Dunn D.M."/>
            <person name="Green E.D."/>
            <person name="Blakesley R.W."/>
            <person name="Bouffard G.G."/>
            <person name="De Jong P.J."/>
            <person name="Osoegawa K."/>
            <person name="Zhu B."/>
            <person name="Marra M."/>
            <person name="Schein J."/>
            <person name="Bosdet I."/>
            <person name="Fjell C."/>
            <person name="Jones S."/>
            <person name="Krzywinski M."/>
            <person name="Mathewson C."/>
            <person name="Siddiqui A."/>
            <person name="Wye N."/>
            <person name="McPherson J."/>
            <person name="Zhao S."/>
            <person name="Fraser C.M."/>
            <person name="Shetty J."/>
            <person name="Shatsman S."/>
            <person name="Geer K."/>
            <person name="Chen Y."/>
            <person name="Abramzon S."/>
            <person name="Nierman W.C."/>
            <person name="Havlak P.H."/>
            <person name="Chen R."/>
            <person name="Durbin K.J."/>
            <person name="Egan A."/>
            <person name="Ren Y."/>
            <person name="Song X.-Z."/>
            <person name="Li B."/>
            <person name="Liu Y."/>
            <person name="Qin X."/>
            <person name="Cawley S."/>
            <person name="Cooney A.J."/>
            <person name="D'Souza L.M."/>
            <person name="Martin K."/>
            <person name="Wu J.Q."/>
            <person name="Gonzalez-Garay M.L."/>
            <person name="Jackson A.R."/>
            <person name="Kalafus K.J."/>
            <person name="McLeod M.P."/>
            <person name="Milosavljevic A."/>
            <person name="Virk D."/>
            <person name="Volkov A."/>
            <person name="Wheeler D.A."/>
            <person name="Zhang Z."/>
            <person name="Bailey J.A."/>
            <person name="Eichler E.E."/>
            <person name="Tuzun E."/>
            <person name="Birney E."/>
            <person name="Mongin E."/>
            <person name="Ureta-Vidal A."/>
            <person name="Woodwark C."/>
            <person name="Zdobnov E."/>
            <person name="Bork P."/>
            <person name="Suyama M."/>
            <person name="Torrents D."/>
            <person name="Alexandersson M."/>
            <person name="Trask B.J."/>
            <person name="Young J.M."/>
            <person name="Huang H."/>
            <person name="Wang H."/>
            <person name="Xing H."/>
            <person name="Daniels S."/>
            <person name="Gietzen D."/>
            <person name="Schmidt J."/>
            <person name="Stevens K."/>
            <person name="Vitt U."/>
            <person name="Wingrove J."/>
            <person name="Camara F."/>
            <person name="Mar Alba M."/>
            <person name="Abril J.F."/>
            <person name="Guigo R."/>
            <person name="Smit A."/>
            <person name="Dubchak I."/>
            <person name="Rubin E.M."/>
            <person name="Couronne O."/>
            <person name="Poliakov A."/>
            <person name="Huebner N."/>
            <person name="Ganten D."/>
            <person name="Goesele C."/>
            <person name="Hummel O."/>
            <person name="Kreitler T."/>
            <person name="Lee Y.-A."/>
            <person name="Monti J."/>
            <person name="Schulz H."/>
            <person name="Zimdahl H."/>
            <person name="Himmelbauer H."/>
            <person name="Lehrach H."/>
            <person name="Jacob H.J."/>
            <person name="Bromberg S."/>
            <person name="Gullings-Handley J."/>
            <person name="Jensen-Seaman M.I."/>
            <person name="Kwitek A.E."/>
            <person name="Lazar J."/>
            <person name="Pasko D."/>
            <person name="Tonellato P.J."/>
            <person name="Twigger S."/>
            <person name="Ponting C.P."/>
            <person name="Duarte J.M."/>
            <person name="Rice S."/>
            <person name="Goodstadt L."/>
            <person name="Beatson S.A."/>
            <person name="Emes R.D."/>
            <person name="Winter E.E."/>
            <person name="Webber C."/>
            <person name="Brandt P."/>
            <person name="Nyakatura G."/>
            <person name="Adetobi M."/>
            <person name="Chiaromonte F."/>
            <person name="Elnitski L."/>
            <person name="Eswara P."/>
            <person name="Hardison R.C."/>
            <person name="Hou M."/>
            <person name="Kolbe D."/>
            <person name="Makova K."/>
            <person name="Miller W."/>
            <person name="Nekrutenko A."/>
            <person name="Riemer C."/>
            <person name="Schwartz S."/>
            <person name="Taylor J."/>
            <person name="Yang S."/>
            <person name="Zhang Y."/>
            <person name="Lindpaintner K."/>
            <person name="Andrews T.D."/>
            <person name="Caccamo M."/>
            <person name="Clamp M."/>
            <person name="Clarke L."/>
            <person name="Curwen V."/>
            <person name="Durbin R.M."/>
            <person name="Eyras E."/>
            <person name="Searle S.M."/>
            <person name="Cooper G.M."/>
            <person name="Batzoglou S."/>
            <person name="Brudno M."/>
            <person name="Sidow A."/>
            <person name="Stone E.A."/>
            <person name="Payseur B.A."/>
            <person name="Bourque G."/>
            <person name="Lopez-Otin C."/>
            <person name="Puente X.S."/>
            <person name="Chakrabarti K."/>
            <person name="Chatterji S."/>
            <person name="Dewey C."/>
            <person name="Pachter L."/>
            <person name="Bray N."/>
            <person name="Yap V.B."/>
            <person name="Caspi A."/>
            <person name="Tesler G."/>
            <person name="Pevzner P.A."/>
            <person name="Haussler D."/>
            <person name="Roskin K.M."/>
            <person name="Baertsch R."/>
            <person name="Clawson H."/>
            <person name="Furey T.S."/>
            <person name="Hinrichs A.S."/>
            <person name="Karolchik D."/>
            <person name="Kent W.J."/>
            <person name="Rosenbloom K.R."/>
            <person name="Trumbower H."/>
            <person name="Weirauch M."/>
            <person name="Cooper D.N."/>
            <person name="Stenson P.D."/>
            <person name="Ma B."/>
            <person name="Brent M."/>
            <person name="Arumugam M."/>
            <person name="Shteynberg D."/>
            <person name="Copley R.R."/>
            <person name="Taylor M.S."/>
            <person name="Riethman H."/>
            <person name="Mudunuri U."/>
            <person name="Peterson J."/>
            <person name="Guyer M."/>
            <person name="Felsenfeld A."/>
            <person name="Old S."/>
            <person name="Mockrin S."/>
            <person name="Collins F.S."/>
        </authorList>
    </citation>
    <scope>NUCLEOTIDE SEQUENCE [LARGE SCALE GENOMIC DNA]</scope>
    <source>
        <strain>Brown Norway</strain>
    </source>
</reference>
<reference key="2">
    <citation type="submission" date="2005-09" db="EMBL/GenBank/DDBJ databases">
        <authorList>
            <person name="Mural R.J."/>
            <person name="Adams M.D."/>
            <person name="Myers E.W."/>
            <person name="Smith H.O."/>
            <person name="Venter J.C."/>
        </authorList>
    </citation>
    <scope>NUCLEOTIDE SEQUENCE [LARGE SCALE GENOMIC DNA]</scope>
</reference>
<reference key="3">
    <citation type="journal article" date="2012" name="Nat. Commun.">
        <title>Quantitative maps of protein phosphorylation sites across 14 different rat organs and tissues.</title>
        <authorList>
            <person name="Lundby A."/>
            <person name="Secher A."/>
            <person name="Lage K."/>
            <person name="Nordsborg N.B."/>
            <person name="Dmytriyev A."/>
            <person name="Lundby C."/>
            <person name="Olsen J.V."/>
        </authorList>
    </citation>
    <scope>PHOSPHORYLATION [LARGE SCALE ANALYSIS] AT SER-38; SER-447 AND SER-507</scope>
    <scope>IDENTIFICATION BY MASS SPECTROMETRY [LARGE SCALE ANALYSIS]</scope>
</reference>
<reference key="4">
    <citation type="journal article" date="2004" name="Nature">
        <title>Structural basis of the alpha1-beta subunit interaction of voltage-gated Ca2+ channels.</title>
        <authorList>
            <person name="Chen Y.H."/>
            <person name="Li M.H."/>
            <person name="Zhang Y."/>
            <person name="He L.L."/>
            <person name="Yamada Y."/>
            <person name="Fitzmaurice A."/>
            <person name="Shen Y."/>
            <person name="Zhang H."/>
            <person name="Tong L."/>
            <person name="Yang J."/>
        </authorList>
    </citation>
    <scope>X-RAY CRYSTALLOGRAPHY (3.00 ANGSTROMS) OF 49-407</scope>
</reference>
<sequence length="519" mass="57964">MSSSYAKNGAADGPHSPSSQVARGTTTRRSRLKRSDGSTTSTSFILRQGSADSYTSRPSDSDVSLEEDREAIRQEREQQAAIQLERAKSKPVAFAVKTNVSYCGALDEDVPVPSTAISFDAKDFLHIKEKYNNDWWIGRLVKEGCEIGFIPSPLRLENIRIQQEQKRGRFHGGKSSGNSSSSLGEMVSGTFRATPTTTAKQKQKVTEHIPPYDVVPSMRPVVLVGPSLKGYEVTDMMQKALFDFLKHRFDGRISITRVTADISLAKRSVLNNPSKRAIIERSNTRSSLAEVQSEIERIFELARSLQLVVLDADTINHPAQLIKTSLAPIIVHVKVSSPKVLQRLIKSRGKSQSKHLNVQLVAADKLAQCPPEMFDVILDENQLEDACEHLGEYLEAYWRATHTSSSTPMTPLLGRNVGSTALSPYPTAISGLQSQRMRHSNHSTENSPIERRSLMTSDENYHNERARKSRNRLSSSSQHSRDHYPLVEEDYPDSYQDTYKPHRNRGSPGGCSHDSRHRL</sequence>
<feature type="chain" id="PRO_0000438478" description="Voltage-dependent L-type calcium channel subunit beta-4">
    <location>
        <begin position="1"/>
        <end position="519"/>
    </location>
</feature>
<feature type="domain" description="SH3" evidence="3">
    <location>
        <begin position="91"/>
        <end position="160"/>
    </location>
</feature>
<feature type="region of interest" description="Disordered" evidence="4">
    <location>
        <begin position="1"/>
        <end position="70"/>
    </location>
</feature>
<feature type="region of interest" description="Disordered" evidence="4">
    <location>
        <begin position="165"/>
        <end position="185"/>
    </location>
</feature>
<feature type="region of interest" description="Disordered" evidence="4">
    <location>
        <begin position="424"/>
        <end position="519"/>
    </location>
</feature>
<feature type="compositionally biased region" description="Polar residues" evidence="4">
    <location>
        <begin position="16"/>
        <end position="25"/>
    </location>
</feature>
<feature type="compositionally biased region" description="Polar residues" evidence="4">
    <location>
        <begin position="37"/>
        <end position="62"/>
    </location>
</feature>
<feature type="compositionally biased region" description="Low complexity" evidence="4">
    <location>
        <begin position="176"/>
        <end position="185"/>
    </location>
</feature>
<feature type="compositionally biased region" description="Basic and acidic residues" evidence="4">
    <location>
        <begin position="448"/>
        <end position="466"/>
    </location>
</feature>
<feature type="modified residue" description="Phosphoserine" evidence="7">
    <location>
        <position position="38"/>
    </location>
</feature>
<feature type="modified residue" description="Phosphoserine" evidence="2">
    <location>
        <position position="182"/>
    </location>
</feature>
<feature type="modified residue" description="Phosphothreonine" evidence="2">
    <location>
        <position position="410"/>
    </location>
</feature>
<feature type="modified residue" description="Phosphoserine" evidence="7">
    <location>
        <position position="447"/>
    </location>
</feature>
<feature type="modified residue" description="Omega-N-methylarginine" evidence="2">
    <location>
        <position position="505"/>
    </location>
</feature>
<feature type="modified residue" description="Phosphoserine" evidence="7">
    <location>
        <position position="507"/>
    </location>
</feature>
<feature type="splice variant" id="VSP_058665" description="In isoform 2.">
    <original>SSSYAKNGAADGPHSPSSQVARGTTTRRSRLKRSDGSTTSTSFILRQ</original>
    <variation>YDNLYLHGVEDSEA</variation>
    <location>
        <begin position="2"/>
        <end position="48"/>
    </location>
</feature>
<feature type="helix" evidence="9">
    <location>
        <begin position="64"/>
        <end position="87"/>
    </location>
</feature>
<feature type="strand" evidence="9">
    <location>
        <begin position="94"/>
        <end position="100"/>
    </location>
</feature>
<feature type="helix" evidence="9">
    <location>
        <begin position="104"/>
        <end position="106"/>
    </location>
</feature>
<feature type="strand" evidence="9">
    <location>
        <begin position="124"/>
        <end position="130"/>
    </location>
</feature>
<feature type="strand" evidence="9">
    <location>
        <begin position="132"/>
        <end position="142"/>
    </location>
</feature>
<feature type="strand" evidence="9">
    <location>
        <begin position="148"/>
        <end position="151"/>
    </location>
</feature>
<feature type="helix" evidence="9">
    <location>
        <begin position="153"/>
        <end position="165"/>
    </location>
</feature>
<feature type="strand" evidence="9">
    <location>
        <begin position="211"/>
        <end position="215"/>
    </location>
</feature>
<feature type="strand" evidence="9">
    <location>
        <begin position="219"/>
        <end position="224"/>
    </location>
</feature>
<feature type="helix" evidence="8">
    <location>
        <begin position="232"/>
        <end position="248"/>
    </location>
</feature>
<feature type="turn" evidence="8">
    <location>
        <begin position="249"/>
        <end position="251"/>
    </location>
</feature>
<feature type="strand" evidence="8">
    <location>
        <begin position="252"/>
        <end position="258"/>
    </location>
</feature>
<feature type="helix" evidence="8">
    <location>
        <begin position="262"/>
        <end position="264"/>
    </location>
</feature>
<feature type="helix" evidence="8">
    <location>
        <begin position="288"/>
        <end position="302"/>
    </location>
</feature>
<feature type="strand" evidence="8">
    <location>
        <begin position="307"/>
        <end position="312"/>
    </location>
</feature>
<feature type="helix" evidence="8">
    <location>
        <begin position="318"/>
        <end position="321"/>
    </location>
</feature>
<feature type="strand" evidence="8">
    <location>
        <begin position="329"/>
        <end position="333"/>
    </location>
</feature>
<feature type="helix" evidence="8">
    <location>
        <begin position="338"/>
        <end position="346"/>
    </location>
</feature>
<feature type="helix" evidence="8">
    <location>
        <begin position="350"/>
        <end position="353"/>
    </location>
</feature>
<feature type="helix" evidence="8">
    <location>
        <begin position="356"/>
        <end position="367"/>
    </location>
</feature>
<feature type="helix" evidence="8">
    <location>
        <begin position="371"/>
        <end position="373"/>
    </location>
</feature>
<feature type="strand" evidence="8">
    <location>
        <begin position="375"/>
        <end position="378"/>
    </location>
</feature>
<feature type="strand" evidence="8">
    <location>
        <begin position="380"/>
        <end position="382"/>
    </location>
</feature>
<feature type="helix" evidence="8">
    <location>
        <begin position="383"/>
        <end position="401"/>
    </location>
</feature>
<name>CACB4_RAT</name>
<comment type="function">
    <text evidence="1">The beta subunit of voltage-dependent calcium channels contributes to the function of the calcium channel by increasing peak calcium current, shifting the voltage dependencies of activation and inactivation, modulating G protein inhibition and controlling the alpha-1 subunit membrane targeting.</text>
</comment>
<comment type="subunit">
    <text evidence="1 2">The L-type calcium channel is composed of four subunits: alpha-1, alpha-2, beta and gamma. Interacts with FASLG (By similarity). Interacts with CBARP (By similarity).</text>
</comment>
<comment type="interaction">
    <interactant intactId="EBI-8028403">
        <id>D4A055</id>
    </interactant>
    <interactant intactId="EBI-8028449">
        <id>Q91V89</id>
        <label>Ppp2r5d</label>
    </interactant>
    <organismsDiffer>true</organismsDiffer>
    <experiments>4</experiments>
</comment>
<comment type="interaction">
    <interactant intactId="EBI-8028403">
        <id>D4A055</id>
    </interactant>
    <interactant intactId="EBI-6935292">
        <id>P63058</id>
        <label>Thra</label>
    </interactant>
    <organismsDiffer>true</organismsDiffer>
    <experiments>2</experiments>
</comment>
<comment type="alternative products">
    <event type="alternative splicing"/>
    <isoform>
        <id>D4A055-2</id>
        <name>1</name>
        <sequence type="displayed"/>
    </isoform>
    <isoform>
        <id>D4A055-1</id>
        <name>2</name>
        <sequence type="described" ref="VSP_058665"/>
    </isoform>
</comment>
<comment type="similarity">
    <text evidence="5">Belongs to the calcium channel beta subunit family.</text>
</comment>
<evidence type="ECO:0000250" key="1">
    <source>
        <dbReference type="UniProtKB" id="O00305"/>
    </source>
</evidence>
<evidence type="ECO:0000250" key="2">
    <source>
        <dbReference type="UniProtKB" id="Q8R0S4"/>
    </source>
</evidence>
<evidence type="ECO:0000255" key="3">
    <source>
        <dbReference type="PROSITE-ProRule" id="PRU00192"/>
    </source>
</evidence>
<evidence type="ECO:0000256" key="4">
    <source>
        <dbReference type="SAM" id="MobiDB-lite"/>
    </source>
</evidence>
<evidence type="ECO:0000305" key="5"/>
<evidence type="ECO:0000312" key="6">
    <source>
        <dbReference type="RGD" id="68385"/>
    </source>
</evidence>
<evidence type="ECO:0007744" key="7">
    <source>
    </source>
</evidence>
<evidence type="ECO:0007829" key="8">
    <source>
        <dbReference type="PDB" id="1VYV"/>
    </source>
</evidence>
<evidence type="ECO:0007829" key="9">
    <source>
        <dbReference type="PDB" id="6HW2"/>
    </source>
</evidence>
<gene>
    <name evidence="6" type="primary">Cacnb4</name>
</gene>
<organism>
    <name type="scientific">Rattus norvegicus</name>
    <name type="common">Rat</name>
    <dbReference type="NCBI Taxonomy" id="10116"/>
    <lineage>
        <taxon>Eukaryota</taxon>
        <taxon>Metazoa</taxon>
        <taxon>Chordata</taxon>
        <taxon>Craniata</taxon>
        <taxon>Vertebrata</taxon>
        <taxon>Euteleostomi</taxon>
        <taxon>Mammalia</taxon>
        <taxon>Eutheria</taxon>
        <taxon>Euarchontoglires</taxon>
        <taxon>Glires</taxon>
        <taxon>Rodentia</taxon>
        <taxon>Myomorpha</taxon>
        <taxon>Muroidea</taxon>
        <taxon>Muridae</taxon>
        <taxon>Murinae</taxon>
        <taxon>Rattus</taxon>
    </lineage>
</organism>
<protein>
    <recommendedName>
        <fullName evidence="5">Voltage-dependent L-type calcium channel subunit beta-4</fullName>
        <shortName evidence="5">CAB4</shortName>
    </recommendedName>
    <alternativeName>
        <fullName evidence="5">Calcium channel voltage-dependent subunit beta 4</fullName>
    </alternativeName>
</protein>